<dbReference type="EMBL" id="AC011663">
    <property type="protein sequence ID" value="AAG52343.1"/>
    <property type="molecule type" value="Genomic_DNA"/>
</dbReference>
<dbReference type="EMBL" id="CP002684">
    <property type="protein sequence ID" value="AEE35096.1"/>
    <property type="molecule type" value="Genomic_DNA"/>
</dbReference>
<dbReference type="EMBL" id="BT004011">
    <property type="protein sequence ID" value="AAO42048.1"/>
    <property type="molecule type" value="mRNA"/>
</dbReference>
<dbReference type="EMBL" id="BT004943">
    <property type="protein sequence ID" value="AAO50476.1"/>
    <property type="molecule type" value="mRNA"/>
</dbReference>
<dbReference type="EMBL" id="AY088344">
    <property type="protein sequence ID" value="AAM65883.1"/>
    <property type="molecule type" value="mRNA"/>
</dbReference>
<dbReference type="PIR" id="H96730">
    <property type="entry name" value="H96730"/>
</dbReference>
<dbReference type="RefSeq" id="NP_564994.1">
    <molecule id="Q9CAB6-1"/>
    <property type="nucleotide sequence ID" value="NM_105734.3"/>
</dbReference>
<dbReference type="SMR" id="Q9CAB6"/>
<dbReference type="BioGRID" id="28623">
    <property type="interactions" value="5"/>
</dbReference>
<dbReference type="FunCoup" id="Q9CAB6">
    <property type="interactions" value="4166"/>
</dbReference>
<dbReference type="IntAct" id="Q9CAB6">
    <property type="interactions" value="3"/>
</dbReference>
<dbReference type="STRING" id="3702.Q9CAB6"/>
<dbReference type="PaxDb" id="3702-AT1G70660.1"/>
<dbReference type="EnsemblPlants" id="AT1G70660.1">
    <molecule id="Q9CAB6-1"/>
    <property type="protein sequence ID" value="AT1G70660.1"/>
    <property type="gene ID" value="AT1G70660"/>
</dbReference>
<dbReference type="GeneID" id="843403"/>
<dbReference type="Gramene" id="AT1G70660.1">
    <molecule id="Q9CAB6-1"/>
    <property type="protein sequence ID" value="AT1G70660.1"/>
    <property type="gene ID" value="AT1G70660"/>
</dbReference>
<dbReference type="KEGG" id="ath:AT1G70660"/>
<dbReference type="Araport" id="AT1G70660"/>
<dbReference type="TAIR" id="AT1G70660">
    <property type="gene designation" value="MMZ2"/>
</dbReference>
<dbReference type="eggNOG" id="KOG0896">
    <property type="taxonomic scope" value="Eukaryota"/>
</dbReference>
<dbReference type="InParanoid" id="Q9CAB6"/>
<dbReference type="PhylomeDB" id="Q9CAB6"/>
<dbReference type="PRO" id="PR:Q9CAB6"/>
<dbReference type="Proteomes" id="UP000006548">
    <property type="component" value="Chromosome 1"/>
</dbReference>
<dbReference type="ExpressionAtlas" id="Q9CAB6">
    <property type="expression patterns" value="baseline and differential"/>
</dbReference>
<dbReference type="GO" id="GO:0005739">
    <property type="term" value="C:mitochondrion"/>
    <property type="evidence" value="ECO:0007005"/>
    <property type="project" value="TAIR"/>
</dbReference>
<dbReference type="GO" id="GO:0031372">
    <property type="term" value="C:UBC13-MMS2 complex"/>
    <property type="evidence" value="ECO:0000353"/>
    <property type="project" value="TAIR"/>
</dbReference>
<dbReference type="GO" id="GO:1902916">
    <property type="term" value="P:positive regulation of protein polyubiquitination"/>
    <property type="evidence" value="ECO:0000314"/>
    <property type="project" value="TAIR"/>
</dbReference>
<dbReference type="GO" id="GO:0006301">
    <property type="term" value="P:postreplication repair"/>
    <property type="evidence" value="ECO:0000316"/>
    <property type="project" value="TAIR"/>
</dbReference>
<dbReference type="CDD" id="cd23807">
    <property type="entry name" value="UEV_UBE2V"/>
    <property type="match status" value="1"/>
</dbReference>
<dbReference type="FunFam" id="3.10.110.10:FF:000019">
    <property type="entry name" value="Ubiquitin-conjugating enzyme E2 variant 1C"/>
    <property type="match status" value="1"/>
</dbReference>
<dbReference type="Gene3D" id="3.10.110.10">
    <property type="entry name" value="Ubiquitin Conjugating Enzyme"/>
    <property type="match status" value="1"/>
</dbReference>
<dbReference type="InterPro" id="IPR000608">
    <property type="entry name" value="UBQ-conjugat_E2_core"/>
</dbReference>
<dbReference type="InterPro" id="IPR016135">
    <property type="entry name" value="UBQ-conjugating_enzyme/RWD"/>
</dbReference>
<dbReference type="PANTHER" id="PTHR24068">
    <property type="entry name" value="UBIQUITIN-CONJUGATING ENZYME E2"/>
    <property type="match status" value="1"/>
</dbReference>
<dbReference type="Pfam" id="PF00179">
    <property type="entry name" value="UQ_con"/>
    <property type="match status" value="1"/>
</dbReference>
<dbReference type="SMART" id="SM00212">
    <property type="entry name" value="UBCc"/>
    <property type="match status" value="1"/>
</dbReference>
<dbReference type="SUPFAM" id="SSF54495">
    <property type="entry name" value="UBC-like"/>
    <property type="match status" value="1"/>
</dbReference>
<dbReference type="PROSITE" id="PS50127">
    <property type="entry name" value="UBC_2"/>
    <property type="match status" value="1"/>
</dbReference>
<organism>
    <name type="scientific">Arabidopsis thaliana</name>
    <name type="common">Mouse-ear cress</name>
    <dbReference type="NCBI Taxonomy" id="3702"/>
    <lineage>
        <taxon>Eukaryota</taxon>
        <taxon>Viridiplantae</taxon>
        <taxon>Streptophyta</taxon>
        <taxon>Embryophyta</taxon>
        <taxon>Tracheophyta</taxon>
        <taxon>Spermatophyta</taxon>
        <taxon>Magnoliopsida</taxon>
        <taxon>eudicotyledons</taxon>
        <taxon>Gunneridae</taxon>
        <taxon>Pentapetalae</taxon>
        <taxon>rosids</taxon>
        <taxon>malvids</taxon>
        <taxon>Brassicales</taxon>
        <taxon>Brassicaceae</taxon>
        <taxon>Camelineae</taxon>
        <taxon>Arabidopsis</taxon>
    </lineage>
</organism>
<gene>
    <name type="primary">UEV1B</name>
    <name type="synonym">MMZ2</name>
    <name type="ordered locus">At1g70660</name>
    <name type="ORF">F5A18.16</name>
</gene>
<accession>Q9CAB6</accession>
<accession>Q8L9N0</accession>
<name>UEV1B_ARATH</name>
<sequence length="159" mass="18001">MGSEEEKVVVPRNFRLLEELERGEKGIGDGTVSYGMDDADDILMQSWTGTILGPHNTAYEGKIFQLKLFCGKDYPESPPTVRFQSRINMACVNPENGVVDPSHFPMLSNWRREFTMEDLLIQLKKEMMSSQNRKLAQPLEGNEEGRTDPKGLVVKCCVM</sequence>
<proteinExistence type="evidence at protein level"/>
<keyword id="KW-0025">Alternative splicing</keyword>
<keyword id="KW-1185">Reference proteome</keyword>
<reference key="1">
    <citation type="journal article" date="2000" name="Nature">
        <title>Sequence and analysis of chromosome 1 of the plant Arabidopsis thaliana.</title>
        <authorList>
            <person name="Theologis A."/>
            <person name="Ecker J.R."/>
            <person name="Palm C.J."/>
            <person name="Federspiel N.A."/>
            <person name="Kaul S."/>
            <person name="White O."/>
            <person name="Alonso J."/>
            <person name="Altafi H."/>
            <person name="Araujo R."/>
            <person name="Bowman C.L."/>
            <person name="Brooks S.Y."/>
            <person name="Buehler E."/>
            <person name="Chan A."/>
            <person name="Chao Q."/>
            <person name="Chen H."/>
            <person name="Cheuk R.F."/>
            <person name="Chin C.W."/>
            <person name="Chung M.K."/>
            <person name="Conn L."/>
            <person name="Conway A.B."/>
            <person name="Conway A.R."/>
            <person name="Creasy T.H."/>
            <person name="Dewar K."/>
            <person name="Dunn P."/>
            <person name="Etgu P."/>
            <person name="Feldblyum T.V."/>
            <person name="Feng J.-D."/>
            <person name="Fong B."/>
            <person name="Fujii C.Y."/>
            <person name="Gill J.E."/>
            <person name="Goldsmith A.D."/>
            <person name="Haas B."/>
            <person name="Hansen N.F."/>
            <person name="Hughes B."/>
            <person name="Huizar L."/>
            <person name="Hunter J.L."/>
            <person name="Jenkins J."/>
            <person name="Johnson-Hopson C."/>
            <person name="Khan S."/>
            <person name="Khaykin E."/>
            <person name="Kim C.J."/>
            <person name="Koo H.L."/>
            <person name="Kremenetskaia I."/>
            <person name="Kurtz D.B."/>
            <person name="Kwan A."/>
            <person name="Lam B."/>
            <person name="Langin-Hooper S."/>
            <person name="Lee A."/>
            <person name="Lee J.M."/>
            <person name="Lenz C.A."/>
            <person name="Li J.H."/>
            <person name="Li Y.-P."/>
            <person name="Lin X."/>
            <person name="Liu S.X."/>
            <person name="Liu Z.A."/>
            <person name="Luros J.S."/>
            <person name="Maiti R."/>
            <person name="Marziali A."/>
            <person name="Militscher J."/>
            <person name="Miranda M."/>
            <person name="Nguyen M."/>
            <person name="Nierman W.C."/>
            <person name="Osborne B.I."/>
            <person name="Pai G."/>
            <person name="Peterson J."/>
            <person name="Pham P.K."/>
            <person name="Rizzo M."/>
            <person name="Rooney T."/>
            <person name="Rowley D."/>
            <person name="Sakano H."/>
            <person name="Salzberg S.L."/>
            <person name="Schwartz J.R."/>
            <person name="Shinn P."/>
            <person name="Southwick A.M."/>
            <person name="Sun H."/>
            <person name="Tallon L.J."/>
            <person name="Tambunga G."/>
            <person name="Toriumi M.J."/>
            <person name="Town C.D."/>
            <person name="Utterback T."/>
            <person name="Van Aken S."/>
            <person name="Vaysberg M."/>
            <person name="Vysotskaia V.S."/>
            <person name="Walker M."/>
            <person name="Wu D."/>
            <person name="Yu G."/>
            <person name="Fraser C.M."/>
            <person name="Venter J.C."/>
            <person name="Davis R.W."/>
        </authorList>
    </citation>
    <scope>NUCLEOTIDE SEQUENCE [LARGE SCALE GENOMIC DNA]</scope>
    <source>
        <strain>cv. Columbia</strain>
    </source>
</reference>
<reference key="2">
    <citation type="journal article" date="2017" name="Plant J.">
        <title>Araport11: a complete reannotation of the Arabidopsis thaliana reference genome.</title>
        <authorList>
            <person name="Cheng C.Y."/>
            <person name="Krishnakumar V."/>
            <person name="Chan A.P."/>
            <person name="Thibaud-Nissen F."/>
            <person name="Schobel S."/>
            <person name="Town C.D."/>
        </authorList>
    </citation>
    <scope>GENOME REANNOTATION</scope>
    <source>
        <strain>cv. Columbia</strain>
    </source>
</reference>
<reference key="3">
    <citation type="journal article" date="2003" name="Science">
        <title>Empirical analysis of transcriptional activity in the Arabidopsis genome.</title>
        <authorList>
            <person name="Yamada K."/>
            <person name="Lim J."/>
            <person name="Dale J.M."/>
            <person name="Chen H."/>
            <person name="Shinn P."/>
            <person name="Palm C.J."/>
            <person name="Southwick A.M."/>
            <person name="Wu H.C."/>
            <person name="Kim C.J."/>
            <person name="Nguyen M."/>
            <person name="Pham P.K."/>
            <person name="Cheuk R.F."/>
            <person name="Karlin-Newmann G."/>
            <person name="Liu S.X."/>
            <person name="Lam B."/>
            <person name="Sakano H."/>
            <person name="Wu T."/>
            <person name="Yu G."/>
            <person name="Miranda M."/>
            <person name="Quach H.L."/>
            <person name="Tripp M."/>
            <person name="Chang C.H."/>
            <person name="Lee J.M."/>
            <person name="Toriumi M.J."/>
            <person name="Chan M.M."/>
            <person name="Tang C.C."/>
            <person name="Onodera C.S."/>
            <person name="Deng J.M."/>
            <person name="Akiyama K."/>
            <person name="Ansari Y."/>
            <person name="Arakawa T."/>
            <person name="Banh J."/>
            <person name="Banno F."/>
            <person name="Bowser L."/>
            <person name="Brooks S.Y."/>
            <person name="Carninci P."/>
            <person name="Chao Q."/>
            <person name="Choy N."/>
            <person name="Enju A."/>
            <person name="Goldsmith A.D."/>
            <person name="Gurjal M."/>
            <person name="Hansen N.F."/>
            <person name="Hayashizaki Y."/>
            <person name="Johnson-Hopson C."/>
            <person name="Hsuan V.W."/>
            <person name="Iida K."/>
            <person name="Karnes M."/>
            <person name="Khan S."/>
            <person name="Koesema E."/>
            <person name="Ishida J."/>
            <person name="Jiang P.X."/>
            <person name="Jones T."/>
            <person name="Kawai J."/>
            <person name="Kamiya A."/>
            <person name="Meyers C."/>
            <person name="Nakajima M."/>
            <person name="Narusaka M."/>
            <person name="Seki M."/>
            <person name="Sakurai T."/>
            <person name="Satou M."/>
            <person name="Tamse R."/>
            <person name="Vaysberg M."/>
            <person name="Wallender E.K."/>
            <person name="Wong C."/>
            <person name="Yamamura Y."/>
            <person name="Yuan S."/>
            <person name="Shinozaki K."/>
            <person name="Davis R.W."/>
            <person name="Theologis A."/>
            <person name="Ecker J.R."/>
        </authorList>
    </citation>
    <scope>NUCLEOTIDE SEQUENCE [LARGE SCALE MRNA]</scope>
    <source>
        <strain>cv. Columbia</strain>
    </source>
</reference>
<reference key="4">
    <citation type="submission" date="2002-03" db="EMBL/GenBank/DDBJ databases">
        <title>Full-length cDNA from Arabidopsis thaliana.</title>
        <authorList>
            <person name="Brover V.V."/>
            <person name="Troukhan M.E."/>
            <person name="Alexandrov N.A."/>
            <person name="Lu Y.-P."/>
            <person name="Flavell R.B."/>
            <person name="Feldmann K.A."/>
        </authorList>
    </citation>
    <scope>NUCLEOTIDE SEQUENCE [LARGE SCALE MRNA]</scope>
</reference>
<reference key="5">
    <citation type="journal article" date="2007" name="Plant Cell">
        <title>Ubiquitin lysine 63 chain forming ligases regulate apical dominance in Arabidopsis.</title>
        <authorList>
            <person name="Yin X.-J."/>
            <person name="Volk S."/>
            <person name="Ljung K."/>
            <person name="Mehlmer N."/>
            <person name="Dolezal K."/>
            <person name="Ditengou F."/>
            <person name="Hanano S."/>
            <person name="Davis S.J."/>
            <person name="Schmelzer E."/>
            <person name="Sandberg G."/>
            <person name="Teige M."/>
            <person name="Palme K."/>
            <person name="Pickart C."/>
            <person name="Bachmair A."/>
        </authorList>
    </citation>
    <scope>IDENTIFICATION</scope>
    <scope>FUNCTION</scope>
    <scope>SUBUNIT</scope>
</reference>
<reference key="6">
    <citation type="journal article" date="2008" name="Plant Cell">
        <title>Arabidopsis UEV1D promotes lysine-63-linked polyubiquitination and is involved in DNA damage response.</title>
        <authorList>
            <person name="Wen R."/>
            <person name="Torres-Acosta J.A."/>
            <person name="Pastushok L."/>
            <person name="Lai X."/>
            <person name="Pelzer L."/>
            <person name="Wang H."/>
            <person name="Xiao W."/>
        </authorList>
    </citation>
    <scope>FUNCTION</scope>
    <scope>TISSUE SPECIFICITY</scope>
    <scope>DEVELOPMENTAL STAGE</scope>
    <scope>INDUCTION</scope>
    <scope>INTERACTION WITH UBC35 AND UBC 36</scope>
</reference>
<protein>
    <recommendedName>
        <fullName>Ubiquitin-conjugating enzyme E2 variant 1B</fullName>
        <shortName>Ubc enzyme variant 1B</shortName>
    </recommendedName>
    <alternativeName>
        <fullName>Protein MMS ZWEI HOMOLOG 2</fullName>
    </alternativeName>
</protein>
<feature type="chain" id="PRO_0000344627" description="Ubiquitin-conjugating enzyme E2 variant 1B">
    <location>
        <begin position="1"/>
        <end position="159"/>
    </location>
</feature>
<feature type="domain" description="UBC core" evidence="1">
    <location>
        <begin position="11"/>
        <end position="159"/>
    </location>
</feature>
<feature type="sequence conflict" description="In Ref. 4; AAM65883." evidence="4" ref="4">
    <original>F</original>
    <variation>Y</variation>
    <location>
        <position position="114"/>
    </location>
</feature>
<feature type="sequence conflict" description="In Ref. 4; AAM65883." evidence="4" ref="4">
    <original>E</original>
    <variation>D</variation>
    <location>
        <position position="117"/>
    </location>
</feature>
<evidence type="ECO:0000255" key="1">
    <source>
        <dbReference type="PROSITE-ProRule" id="PRU00388"/>
    </source>
</evidence>
<evidence type="ECO:0000269" key="2">
    <source>
    </source>
</evidence>
<evidence type="ECO:0000269" key="3">
    <source>
    </source>
</evidence>
<evidence type="ECO:0000305" key="4"/>
<comment type="function">
    <text evidence="2 3">Has no ubiquitin ligase activity on its own. The heterodimer with UBC catalyzes the synthesis of non-canonical poly-ubiquitin chains that are linked through 'Lys-63'. This type of poly-ubiquitination does not lead to protein degradation by the proteasome. Mediates transcriptional activation of target genes. May play a role in the control of progress through the cell cycle and differentiation. May play a role in the error-free DNA repair pathway and contributes to the survival of cells after DNA damage.</text>
</comment>
<comment type="subunit">
    <text evidence="2">Heterodimer with UBC35 or UBC36.</text>
</comment>
<comment type="alternative products">
    <event type="alternative splicing"/>
    <isoform>
        <id>Q9CAB6-1</id>
        <name>1</name>
        <sequence type="displayed"/>
    </isoform>
    <text>A number of isoforms are produced. According to EST sequences.</text>
</comment>
<comment type="tissue specificity">
    <text evidence="3">Expressed in roots, shoots, leaves, stems and flowers, but not in pollen.</text>
</comment>
<comment type="developmental stage">
    <text evidence="3">Not detected in seedlings 6 hours or 2 days post-germination.</text>
</comment>
<comment type="induction">
    <text evidence="3">Not induced by stresses.</text>
</comment>
<comment type="similarity">
    <text evidence="1">Belongs to the ubiquitin-conjugating enzyme family.</text>
</comment>